<name>PURZ_BPSHA</name>
<proteinExistence type="evidence at protein level"/>
<accession>A0A2H5BHJ6</accession>
<evidence type="ECO:0000255" key="1">
    <source>
        <dbReference type="HAMAP-Rule" id="MF_04166"/>
    </source>
</evidence>
<evidence type="ECO:0000269" key="2">
    <source>
    </source>
</evidence>
<evidence type="ECO:0000305" key="3"/>
<evidence type="ECO:0000305" key="4">
    <source>
    </source>
</evidence>
<evidence type="ECO:0000312" key="5">
    <source>
        <dbReference type="EMBL" id="AUG85481.1"/>
    </source>
</evidence>
<protein>
    <recommendedName>
        <fullName evidence="1">N6-succino-2-amino-2'-deoxyadenylate synthase</fullName>
        <ecNumber evidence="1 2">6.3.4.25</ecNumber>
    </recommendedName>
    <alternativeName>
        <fullName evidence="3">2-amino-2'-deoxyadenylo-succinate synthase</fullName>
    </alternativeName>
    <alternativeName>
        <fullName evidence="1">PurZ</fullName>
    </alternativeName>
</protein>
<comment type="function">
    <text evidence="1 2">Involved in the synthesis of the atypical nucleotide dZTP (2-amino-2'-deoxyadenosine-5'-triphosphate) (PubMed:33926954). Catalyzes the condensation of aspartate with deoxyguanylate into dSMP (N6-succino-2-amino-2'-deoxyadenylate), which undergoes defumarylation and phosphorylation respectively by host PurB and guanylate/nucleoside diphosphate kinases to give dZTP (PubMed:33926954). dZTP is integrated into the viral genome instead of adenine by the viral DNA polymerase. This Z-base probably completely replaces adenosine and forms a triple bond to the opposite T-base (PubMed:33926954). The resulting non-standard viral DNA is called Z-genome (PubMed:33926954). The chemically modified DNA is probably harder for the host bacteria to digest with nucleases or restriction enzymes (Probable).</text>
</comment>
<comment type="catalytic activity">
    <reaction evidence="1 2">
        <text>dGMP + L-aspartate + ATP = (2S)-2-amino-2'-deoxyadenylo-succinate + ADP + phosphate + 2 H(+)</text>
        <dbReference type="Rhea" id="RHEA:67628"/>
        <dbReference type="ChEBI" id="CHEBI:15378"/>
        <dbReference type="ChEBI" id="CHEBI:29991"/>
        <dbReference type="ChEBI" id="CHEBI:30616"/>
        <dbReference type="ChEBI" id="CHEBI:43474"/>
        <dbReference type="ChEBI" id="CHEBI:57673"/>
        <dbReference type="ChEBI" id="CHEBI:172924"/>
        <dbReference type="ChEBI" id="CHEBI:456216"/>
        <dbReference type="EC" id="6.3.4.25"/>
    </reaction>
    <physiologicalReaction direction="left-to-right" evidence="4">
        <dbReference type="Rhea" id="RHEA:67629"/>
    </physiologicalReaction>
</comment>
<comment type="cofactor">
    <cofactor evidence="1">
        <name>Mg(2+)</name>
        <dbReference type="ChEBI" id="CHEBI:18420"/>
    </cofactor>
</comment>
<comment type="biophysicochemical properties">
    <kinetics>
        <KM evidence="2">5.1 uM for dGMP</KM>
        <KM evidence="2">21.1 uM for ATP</KM>
        <KM evidence="2">90.9 uM for Asp</KM>
    </kinetics>
</comment>
<comment type="pathway">
    <text evidence="1 2">Purine metabolism.</text>
</comment>
<comment type="similarity">
    <text evidence="1">Belongs to the Caudovirales PurZ family.</text>
</comment>
<reference key="1">
    <citation type="journal article" date="2019" name="Acta Biochim. Biophys. Sin.">
        <title>Characterization and whole genome analysis of a novel bacteriophage SH-Ab 15497 against multidrug resistant Acinetobacater baummanii.</title>
        <authorList>
            <person name="Hua Y."/>
            <person name="Xu M."/>
            <person name="Wang R."/>
            <person name="Zhang Y."/>
            <person name="Zhu Z."/>
            <person name="Guo M."/>
            <person name="He P."/>
        </authorList>
    </citation>
    <scope>NUCLEOTIDE SEQUENCE [LARGE SCALE GENOMIC DNA]</scope>
</reference>
<reference key="2">
    <citation type="journal article" date="2021" name="Science">
        <title>A widespread pathway for substitution of adenine by diaminopurine in phage genomes.</title>
        <authorList>
            <person name="Zhou Y."/>
            <person name="Xu X."/>
            <person name="Wei Y."/>
            <person name="Cheng Y."/>
            <person name="Guo Y."/>
            <person name="Khudyakov I."/>
            <person name="Liu F."/>
            <person name="He P."/>
            <person name="Song Z."/>
            <person name="Li Z."/>
            <person name="Gao Y."/>
            <person name="Ang E.L."/>
            <person name="Zhao H."/>
            <person name="Zhang Y."/>
            <person name="Zhao S."/>
        </authorList>
    </citation>
    <scope>FUNCTION</scope>
    <scope>BIOPHYSICOCHEMICAL PROPERTIES</scope>
    <scope>CATALYTIC ACTIVITY</scope>
    <scope>ACTIVE SITE</scope>
    <scope>PATHWAY</scope>
</reference>
<dbReference type="EC" id="6.3.4.25" evidence="1 2"/>
<dbReference type="EMBL" id="MG674163">
    <property type="protein sequence ID" value="AUG85481.1"/>
    <property type="molecule type" value="Genomic_DNA"/>
</dbReference>
<dbReference type="SMR" id="A0A2H5BHJ6"/>
<dbReference type="BRENDA" id="6.3.4.25">
    <property type="organism ID" value="17968"/>
</dbReference>
<dbReference type="Proteomes" id="UP000241732">
    <property type="component" value="Genome"/>
</dbReference>
<dbReference type="GO" id="GO:0004019">
    <property type="term" value="F:adenylosuccinate synthase activity"/>
    <property type="evidence" value="ECO:0007669"/>
    <property type="project" value="InterPro"/>
</dbReference>
<dbReference type="GO" id="GO:0005524">
    <property type="term" value="F:ATP binding"/>
    <property type="evidence" value="ECO:0007669"/>
    <property type="project" value="UniProtKB-UniRule"/>
</dbReference>
<dbReference type="GO" id="GO:0000287">
    <property type="term" value="F:magnesium ion binding"/>
    <property type="evidence" value="ECO:0007669"/>
    <property type="project" value="UniProtKB-UniRule"/>
</dbReference>
<dbReference type="GO" id="GO:0044208">
    <property type="term" value="P:'de novo' AMP biosynthetic process"/>
    <property type="evidence" value="ECO:0007669"/>
    <property type="project" value="TreeGrafter"/>
</dbReference>
<dbReference type="GO" id="GO:0046040">
    <property type="term" value="P:IMP metabolic process"/>
    <property type="evidence" value="ECO:0007669"/>
    <property type="project" value="TreeGrafter"/>
</dbReference>
<dbReference type="GO" id="GO:0006164">
    <property type="term" value="P:purine nucleotide biosynthetic process"/>
    <property type="evidence" value="ECO:0000314"/>
    <property type="project" value="UniProtKB"/>
</dbReference>
<dbReference type="Gene3D" id="3.40.440.10">
    <property type="entry name" value="Adenylosuccinate Synthetase, subunit A, domain 1"/>
    <property type="match status" value="1"/>
</dbReference>
<dbReference type="Gene3D" id="1.10.300.10">
    <property type="entry name" value="Adenylosuccinate Synthetase, subunit A, domain 2"/>
    <property type="match status" value="1"/>
</dbReference>
<dbReference type="HAMAP" id="MF_00011">
    <property type="entry name" value="Adenylosucc_synth"/>
    <property type="match status" value="1"/>
</dbReference>
<dbReference type="HAMAP" id="MF_04166">
    <property type="entry name" value="Phage_PURZ"/>
    <property type="match status" value="1"/>
</dbReference>
<dbReference type="InterPro" id="IPR042109">
    <property type="entry name" value="Adenylosuccinate_synth_dom1"/>
</dbReference>
<dbReference type="InterPro" id="IPR042110">
    <property type="entry name" value="Adenylosuccinate_synth_dom2"/>
</dbReference>
<dbReference type="InterPro" id="IPR001114">
    <property type="entry name" value="Adenylosuccinate_synthetase"/>
</dbReference>
<dbReference type="InterPro" id="IPR027417">
    <property type="entry name" value="P-loop_NTPase"/>
</dbReference>
<dbReference type="InterPro" id="IPR046383">
    <property type="entry name" value="Phage_PurZ"/>
</dbReference>
<dbReference type="NCBIfam" id="NF038379">
    <property type="entry name" value="amino_Aden_PurZ"/>
    <property type="match status" value="1"/>
</dbReference>
<dbReference type="PANTHER" id="PTHR11846">
    <property type="entry name" value="ADENYLOSUCCINATE SYNTHETASE"/>
    <property type="match status" value="1"/>
</dbReference>
<dbReference type="PANTHER" id="PTHR11846:SF0">
    <property type="entry name" value="ADENYLOSUCCINATE SYNTHETASE"/>
    <property type="match status" value="1"/>
</dbReference>
<dbReference type="Pfam" id="PF00709">
    <property type="entry name" value="Adenylsucc_synt"/>
    <property type="match status" value="1"/>
</dbReference>
<dbReference type="SMART" id="SM00788">
    <property type="entry name" value="Adenylsucc_synt"/>
    <property type="match status" value="1"/>
</dbReference>
<dbReference type="SUPFAM" id="SSF52540">
    <property type="entry name" value="P-loop containing nucleoside triphosphate hydrolases"/>
    <property type="match status" value="1"/>
</dbReference>
<feature type="chain" id="PRO_0000453689" description="N6-succino-2-amino-2'-deoxyadenylate synthase">
    <location>
        <begin position="1"/>
        <end position="387"/>
    </location>
</feature>
<feature type="active site" description="Proton acceptor" evidence="1 4">
    <location>
        <position position="14"/>
    </location>
</feature>
<feature type="binding site" evidence="1">
    <location>
        <position position="14"/>
    </location>
    <ligand>
        <name>ATP</name>
        <dbReference type="ChEBI" id="CHEBI:30616"/>
    </ligand>
</feature>
<feature type="binding site" evidence="1">
    <location>
        <position position="14"/>
    </location>
    <ligand>
        <name>dGMP</name>
        <dbReference type="ChEBI" id="CHEBI:57673"/>
    </ligand>
</feature>
<feature type="binding site" evidence="1">
    <location>
        <position position="14"/>
    </location>
    <ligand>
        <name>Mg(2+)</name>
        <dbReference type="ChEBI" id="CHEBI:18420"/>
    </ligand>
</feature>
<feature type="binding site" evidence="1">
    <location>
        <position position="15"/>
    </location>
    <ligand>
        <name>ATP</name>
        <dbReference type="ChEBI" id="CHEBI:30616"/>
    </ligand>
</feature>
<feature type="binding site" evidence="1">
    <location>
        <position position="16"/>
    </location>
    <ligand>
        <name>ATP</name>
        <dbReference type="ChEBI" id="CHEBI:30616"/>
    </ligand>
</feature>
<feature type="binding site" evidence="1">
    <location>
        <position position="17"/>
    </location>
    <ligand>
        <name>ATP</name>
        <dbReference type="ChEBI" id="CHEBI:30616"/>
    </ligand>
</feature>
<feature type="binding site" evidence="1">
    <location>
        <position position="18"/>
    </location>
    <ligand>
        <name>ATP</name>
        <dbReference type="ChEBI" id="CHEBI:30616"/>
    </ligand>
</feature>
<feature type="binding site" evidence="1">
    <location>
        <position position="40"/>
    </location>
    <ligand>
        <name>dGMP</name>
        <dbReference type="ChEBI" id="CHEBI:57673"/>
    </ligand>
</feature>
<feature type="binding site" evidence="1">
    <location>
        <position position="42"/>
    </location>
    <ligand>
        <name>ATP</name>
        <dbReference type="ChEBI" id="CHEBI:30616"/>
    </ligand>
</feature>
<feature type="binding site" evidence="1">
    <location>
        <position position="42"/>
    </location>
    <ligand>
        <name>Mg(2+)</name>
        <dbReference type="ChEBI" id="CHEBI:18420"/>
    </ligand>
</feature>
<feature type="binding site" evidence="1">
    <location>
        <position position="43"/>
    </location>
    <ligand>
        <name>ATP</name>
        <dbReference type="ChEBI" id="CHEBI:30616"/>
    </ligand>
</feature>
<feature type="binding site" evidence="1">
    <location>
        <position position="44"/>
    </location>
    <ligand>
        <name>ATP</name>
        <dbReference type="ChEBI" id="CHEBI:30616"/>
    </ligand>
</feature>
<feature type="binding site" evidence="1">
    <location>
        <position position="125"/>
    </location>
    <ligand>
        <name>dGMP</name>
        <dbReference type="ChEBI" id="CHEBI:57673"/>
    </ligand>
</feature>
<feature type="binding site" evidence="1">
    <location>
        <position position="126"/>
    </location>
    <ligand>
        <name>dGMP</name>
        <dbReference type="ChEBI" id="CHEBI:57673"/>
    </ligand>
</feature>
<feature type="binding site" evidence="1">
    <location>
        <position position="140"/>
    </location>
    <ligand>
        <name>dGMP</name>
        <dbReference type="ChEBI" id="CHEBI:57673"/>
    </ligand>
</feature>
<feature type="binding site" evidence="1">
    <location>
        <position position="207"/>
    </location>
    <ligand>
        <name>ATP</name>
        <dbReference type="ChEBI" id="CHEBI:30616"/>
    </ligand>
</feature>
<feature type="binding site" evidence="1">
    <location>
        <position position="222"/>
    </location>
    <ligand>
        <name>dGMP</name>
        <dbReference type="ChEBI" id="CHEBI:57673"/>
    </ligand>
</feature>
<feature type="binding site" evidence="1">
    <location>
        <position position="293"/>
    </location>
    <ligand>
        <name>L-aspartate</name>
        <dbReference type="ChEBI" id="CHEBI:29991"/>
    </ligand>
</feature>
<feature type="binding site" evidence="1">
    <location>
        <position position="293"/>
    </location>
    <ligand>
        <name>Mg(2+)</name>
        <dbReference type="ChEBI" id="CHEBI:18420"/>
    </ligand>
</feature>
<feature type="binding site" evidence="1">
    <location>
        <position position="294"/>
    </location>
    <ligand>
        <name>L-aspartate</name>
        <dbReference type="ChEBI" id="CHEBI:29991"/>
    </ligand>
</feature>
<feature type="binding site" evidence="1">
    <location>
        <position position="299"/>
    </location>
    <ligand>
        <name>L-aspartate</name>
        <dbReference type="ChEBI" id="CHEBI:29991"/>
    </ligand>
</feature>
<feature type="binding site" evidence="1">
    <location>
        <position position="324"/>
    </location>
    <ligand>
        <name>ATP</name>
        <dbReference type="ChEBI" id="CHEBI:30616"/>
    </ligand>
</feature>
<feature type="binding site" evidence="1">
    <location>
        <position position="327"/>
    </location>
    <ligand>
        <name>ATP</name>
        <dbReference type="ChEBI" id="CHEBI:30616"/>
    </ligand>
</feature>
<organism>
    <name type="scientific">Acinetobacter phage SH-Ab 15497</name>
    <dbReference type="NCBI Taxonomy" id="2060946"/>
    <lineage>
        <taxon>Viruses</taxon>
        <taxon>Duplodnaviria</taxon>
        <taxon>Heunggongvirae</taxon>
        <taxon>Uroviricota</taxon>
        <taxon>Caudoviricetes</taxon>
    </lineage>
</organism>
<gene>
    <name evidence="1" type="primary">purZ</name>
    <name evidence="5" type="ORF">SHab15497_00039</name>
</gene>
<keyword id="KW-0067">ATP-binding</keyword>
<keyword id="KW-0436">Ligase</keyword>
<keyword id="KW-0460">Magnesium</keyword>
<keyword id="KW-0479">Metal-binding</keyword>
<keyword id="KW-0547">Nucleotide-binding</keyword>
<keyword id="KW-0658">Purine biosynthesis</keyword>
<keyword id="KW-1185">Reference proteome</keyword>
<organismHost>
    <name type="scientific">Acinetobacter baumannii</name>
    <dbReference type="NCBI Taxonomy" id="470"/>
</organismHost>
<sequence length="387" mass="42646">MKKATVICDMQFGSTGKGLIAGFLAERDQPDVVVTAWSANAGHTYINREGRKWVHCMLANGIVSPKLKAVLIGGGSQMSIPTLISEIMGSLDILQGKSILIHENACIIQQRHVEEEAGPMTKIGSTKKGCGAAMMEKIRRNPESKIVAKDFIDDGLEIPDFKLDGTVGFKDISRHFEELGVCIKVVSNEVYLAVLHKAERVQVEGAQGFSLGLHNGFYPYVTSRECTPAQICSDCNVPISMVDKVVGTMRTYPIRVANRFDDEGKMVGWSGPCYSDQTELTWEQMGVTPEKTTVTKLTRRIFSFSRMQTRQAMLVCMPDEIFLNFANYCASEDELASIIEVISNEGGDVSYIGWGDSAAHIETTLEGDWSDDTNPLFNQYNKSSNIA</sequence>